<reference key="1">
    <citation type="journal article" date="2004" name="Fungal Genet. Biol.">
        <title>Identification of Alternaria brassicicola genes expressed in planta during pathogenesis of Arabidopsis thaliana.</title>
        <authorList>
            <person name="Cramer R.A."/>
            <person name="Lawrence C.B."/>
        </authorList>
    </citation>
    <scope>NUCLEOTIDE SEQUENCE [MRNA]</scope>
    <scope>INDUCTION</scope>
    <source>
        <strain>ATCC 34622</strain>
    </source>
</reference>
<protein>
    <recommendedName>
        <fullName evidence="1">Cyanide hydratase</fullName>
        <shortName evidence="1">CHT</shortName>
        <ecNumber evidence="1">4.2.1.66</ecNumber>
    </recommendedName>
    <alternativeName>
        <fullName evidence="1">Cyanide-degrading nitrilase</fullName>
    </alternativeName>
    <alternativeName>
        <fullName evidence="1">Formamide hydrolyase</fullName>
    </alternativeName>
</protein>
<keyword id="KW-0378">Hydrolase</keyword>
<keyword id="KW-0456">Lyase</keyword>
<evidence type="ECO:0000255" key="1">
    <source>
        <dbReference type="HAMAP-Rule" id="MF_03224"/>
    </source>
</evidence>
<evidence type="ECO:0000255" key="2">
    <source>
        <dbReference type="PROSITE-ProRule" id="PRU00054"/>
    </source>
</evidence>
<evidence type="ECO:0000269" key="3">
    <source>
    </source>
</evidence>
<dbReference type="EC" id="4.2.1.66" evidence="1"/>
<dbReference type="EMBL" id="AY325811">
    <property type="protein sequence ID" value="AAP88966.1"/>
    <property type="molecule type" value="mRNA"/>
</dbReference>
<dbReference type="SMR" id="Q7Z8M6"/>
<dbReference type="GO" id="GO:0030196">
    <property type="term" value="F:cyanide hydratase activity"/>
    <property type="evidence" value="ECO:0007669"/>
    <property type="project" value="UniProtKB-UniRule"/>
</dbReference>
<dbReference type="GO" id="GO:0000257">
    <property type="term" value="F:nitrilase activity"/>
    <property type="evidence" value="ECO:0007669"/>
    <property type="project" value="UniProtKB-ARBA"/>
</dbReference>
<dbReference type="GO" id="GO:0019500">
    <property type="term" value="P:cyanide catabolic process"/>
    <property type="evidence" value="ECO:0007669"/>
    <property type="project" value="UniProtKB-UniRule"/>
</dbReference>
<dbReference type="CDD" id="cd07564">
    <property type="entry name" value="nitrilases_CHs"/>
    <property type="match status" value="1"/>
</dbReference>
<dbReference type="FunFam" id="3.60.110.10:FF:000011">
    <property type="entry name" value="Cyanide hydratase"/>
    <property type="match status" value="1"/>
</dbReference>
<dbReference type="Gene3D" id="3.60.110.10">
    <property type="entry name" value="Carbon-nitrogen hydrolase"/>
    <property type="match status" value="1"/>
</dbReference>
<dbReference type="HAMAP" id="MF_03224">
    <property type="entry name" value="CN_hydrolase"/>
    <property type="match status" value="1"/>
</dbReference>
<dbReference type="InterPro" id="IPR003010">
    <property type="entry name" value="C-N_Hydrolase"/>
</dbReference>
<dbReference type="InterPro" id="IPR036526">
    <property type="entry name" value="C-N_Hydrolase_sf"/>
</dbReference>
<dbReference type="InterPro" id="IPR037544">
    <property type="entry name" value="CN_hydrolase"/>
</dbReference>
<dbReference type="InterPro" id="IPR000132">
    <property type="entry name" value="Nitrilase/CN_hydratase_CS"/>
</dbReference>
<dbReference type="InterPro" id="IPR044149">
    <property type="entry name" value="Nitrilases_CHs"/>
</dbReference>
<dbReference type="PANTHER" id="PTHR46044:SF4">
    <property type="entry name" value="CYANIDE HYDRATASE"/>
    <property type="match status" value="1"/>
</dbReference>
<dbReference type="PANTHER" id="PTHR46044">
    <property type="entry name" value="NITRILASE"/>
    <property type="match status" value="1"/>
</dbReference>
<dbReference type="Pfam" id="PF00795">
    <property type="entry name" value="CN_hydrolase"/>
    <property type="match status" value="1"/>
</dbReference>
<dbReference type="SUPFAM" id="SSF56317">
    <property type="entry name" value="Carbon-nitrogen hydrolase"/>
    <property type="match status" value="1"/>
</dbReference>
<dbReference type="PROSITE" id="PS50263">
    <property type="entry name" value="CN_HYDROLASE"/>
    <property type="match status" value="1"/>
</dbReference>
<dbReference type="PROSITE" id="PS00920">
    <property type="entry name" value="NITRIL_CHT_1"/>
    <property type="match status" value="1"/>
</dbReference>
<dbReference type="PROSITE" id="PS00921">
    <property type="entry name" value="NITRIL_CHT_2"/>
    <property type="match status" value="1"/>
</dbReference>
<accession>Q7Z8M6</accession>
<proteinExistence type="evidence at transcript level"/>
<sequence length="363" mass="40469">MPLTKYKAACVTSEPCWFDLEAGVQKTINFINEAGAAGCKLIAFPEVWIPGYPYWMWKINYQQSLPMLKSYRENSLPMDSEEFRRIRRAARDNQIYVSLGFSEIDHATLYLAQALIGPTGEVINHRRKIKPTHVEKLVYGDGAGDTFKSVTQTELGRLGQLNCWENMNPFLKALNVSEGEQIHIAAWPVYPGKETLKYPDPATNVADPASDLVTPAYAIETGTWTLAPFQRLSVEGLKKTTPEGVEPETDPSTYNGHARIYKPDGTLVCKPDKDFDGLLFVDIDLNECHLAKALADFSGHYMRPDLIRLLVDTRRKELITEADTNGGIATYTTRERLGLNIPLDAQAPKQKATAADVPSSSVM</sequence>
<gene>
    <name type="primary">CyhAB</name>
</gene>
<name>CHT_ALTBR</name>
<comment type="function">
    <text evidence="1">Catalyzes the hydration of cyanide to formamide. Degradation of cyanide may be important for plant pathogenic fungi in infection of cyanogenic plants.</text>
</comment>
<comment type="catalytic activity">
    <reaction evidence="1">
        <text>formamide = hydrogen cyanide + H2O</text>
        <dbReference type="Rhea" id="RHEA:21720"/>
        <dbReference type="ChEBI" id="CHEBI:15377"/>
        <dbReference type="ChEBI" id="CHEBI:16397"/>
        <dbReference type="ChEBI" id="CHEBI:18407"/>
        <dbReference type="EC" id="4.2.1.66"/>
    </reaction>
</comment>
<comment type="subunit">
    <text evidence="1">Oligomer of dimers, forming left-handed helical fibers.</text>
</comment>
<comment type="induction">
    <text evidence="1 3">By cyanide (By similarity). Expressed on the host leaf surface in late stages of fungal infection.</text>
</comment>
<comment type="similarity">
    <text evidence="1">Belongs to the carbon-nitrogen hydrolase superfamily. Nitrilase family.</text>
</comment>
<organism>
    <name type="scientific">Alternaria brassicicola</name>
    <name type="common">Dark leaf spot agent</name>
    <dbReference type="NCBI Taxonomy" id="29001"/>
    <lineage>
        <taxon>Eukaryota</taxon>
        <taxon>Fungi</taxon>
        <taxon>Dikarya</taxon>
        <taxon>Ascomycota</taxon>
        <taxon>Pezizomycotina</taxon>
        <taxon>Dothideomycetes</taxon>
        <taxon>Pleosporomycetidae</taxon>
        <taxon>Pleosporales</taxon>
        <taxon>Pleosporineae</taxon>
        <taxon>Pleosporaceae</taxon>
        <taxon>Alternaria</taxon>
        <taxon>Alternaria sect. Brassicicola</taxon>
    </lineage>
</organism>
<feature type="chain" id="PRO_0000440029" description="Cyanide hydratase">
    <location>
        <begin position="1"/>
        <end position="363"/>
    </location>
</feature>
<feature type="domain" description="CN hydrolase" evidence="2">
    <location>
        <begin position="6"/>
        <end position="285"/>
    </location>
</feature>
<feature type="active site" description="Proton acceptor" evidence="2">
    <location>
        <position position="46"/>
    </location>
</feature>
<feature type="active site" evidence="2">
    <location>
        <position position="128"/>
    </location>
</feature>
<feature type="active site" description="Nucleophile" evidence="2">
    <location>
        <position position="163"/>
    </location>
</feature>